<sequence>MGSKGDNVAVCNMKLERLLSMKGGKGQDSYANNSQAQAMHARSMLHLLEETLENVHLNSSASPPPFTAVDLGCSSGANTVHIIDFIVKHISKRFDAAGIDPPEFTAFFSDLPSNDFNTLFQLLPPLVSNTCMEECLAADGNRSYFVAGVPGSFYRRLFPARTIDFFHSAFSLHWLSQVPESVTDRRSAAYNRGRVFIHGAGEKTTTAYKRQFQADLAEFLRARAAEVKRGGAMFLVCLGRTSVDPTDQGGAGLLFGTHFQDAWDDLVREGLVAAEKRDGFNIPVYAPSLQDFKEVVDANGSFAIDKLVVYKGGSPLVVNEPDDASEVGRAFASSCRSVAGVLVEAHIGEELSNKLFSRVESRATSHAKDVLVNLQFFHIVASLSFT</sequence>
<protein>
    <recommendedName>
        <fullName>Indole-3-acetate O-methyltransferase 1</fullName>
        <ecNumber>2.1.1.278</ecNumber>
    </recommendedName>
    <alternativeName>
        <fullName>IAA carboxylmethyltransferase 1</fullName>
    </alternativeName>
    <alternativeName>
        <fullName>S-adenosyl-L-methionine:(indol-3-yl) acetate carboxylmethyltransferase 1</fullName>
    </alternativeName>
</protein>
<organism>
    <name type="scientific">Arabidopsis thaliana</name>
    <name type="common">Mouse-ear cress</name>
    <dbReference type="NCBI Taxonomy" id="3702"/>
    <lineage>
        <taxon>Eukaryota</taxon>
        <taxon>Viridiplantae</taxon>
        <taxon>Streptophyta</taxon>
        <taxon>Embryophyta</taxon>
        <taxon>Tracheophyta</taxon>
        <taxon>Spermatophyta</taxon>
        <taxon>Magnoliopsida</taxon>
        <taxon>eudicotyledons</taxon>
        <taxon>Gunneridae</taxon>
        <taxon>Pentapetalae</taxon>
        <taxon>rosids</taxon>
        <taxon>malvids</taxon>
        <taxon>Brassicales</taxon>
        <taxon>Brassicaceae</taxon>
        <taxon>Camelineae</taxon>
        <taxon>Arabidopsis</taxon>
    </lineage>
</organism>
<name>IAMT1_ARATH</name>
<accession>Q9FLN8</accession>
<accession>A8MS18</accession>
<accession>Q56ZV4</accession>
<accession>Q8LAR1</accession>
<comment type="function">
    <text evidence="3 4 5">Catalyzes the methylation of the free carboxyl end of the plant hormone indole-3-acetic acid (IAA). Converts IAA to IAA methyl ester (MeIAA). Regulates IAA activities by IAA methylation. Methylation of IAA plays an important role in regulating plant development and auxin homeostasis. Required for correct leaf pattern formation. MeIAA seems to be an inactive form of IAA.</text>
</comment>
<comment type="catalytic activity">
    <reaction evidence="3">
        <text>(indol-3-yl)acetate + S-adenosyl-L-methionine = methyl (indol-3-yl)acetate + S-adenosyl-L-homocysteine</text>
        <dbReference type="Rhea" id="RHEA:36131"/>
        <dbReference type="ChEBI" id="CHEBI:30854"/>
        <dbReference type="ChEBI" id="CHEBI:57856"/>
        <dbReference type="ChEBI" id="CHEBI:59789"/>
        <dbReference type="ChEBI" id="CHEBI:72782"/>
        <dbReference type="EC" id="2.1.1.278"/>
    </reaction>
</comment>
<comment type="cofactor">
    <cofactor evidence="6">
        <name>Mg(2+)</name>
        <dbReference type="ChEBI" id="CHEBI:18420"/>
    </cofactor>
    <text evidence="6">Binds 1 Mg(2+) ion per subunit.</text>
</comment>
<comment type="biophysicochemical properties">
    <kinetics>
        <KM evidence="3">13 uM for indole-3-acetic acid (IAA)</KM>
    </kinetics>
</comment>
<comment type="subunit">
    <text evidence="6">Homodimer.</text>
</comment>
<comment type="alternative products">
    <event type="alternative splicing"/>
    <isoform>
        <id>Q9FLN8-1</id>
        <name>1</name>
        <sequence type="displayed"/>
    </isoform>
    <isoform>
        <id>Q9FLN8-2</id>
        <name>2</name>
        <sequence type="described" ref="VSP_040835"/>
    </isoform>
</comment>
<comment type="tissue specificity">
    <text evidence="4">Expressed in seedling roots and leaves. Expressed in the stigma, funiculus, and vascular bundles in sepals, petals and stamens.</text>
</comment>
<comment type="developmental stage">
    <text evidence="4">After the eighth true leaves emerge, the expression gradually fades away from the center of the leaves toward the edges, as leaf development proceedes. In fully expanded leaves, expressed only at the edge of the leaf blade.</text>
</comment>
<comment type="miscellaneous">
    <text evidence="8">Plant silencing IAMT1 are smaller than the wild-type, show epinastic leaves and smaller siliques, and have low fertility.</text>
</comment>
<comment type="similarity">
    <text evidence="7">Belongs to the methyltransferase superfamily. SABATH family.</text>
</comment>
<comment type="sequence caution" evidence="7">
    <conflict type="erroneous initiation">
        <sequence resource="EMBL-CDS" id="AAM65203"/>
    </conflict>
    <text>Truncated N-terminus.</text>
</comment>
<keyword id="KW-0002">3D-structure</keyword>
<keyword id="KW-0025">Alternative splicing</keyword>
<keyword id="KW-0460">Magnesium</keyword>
<keyword id="KW-0479">Metal-binding</keyword>
<keyword id="KW-0489">Methyltransferase</keyword>
<keyword id="KW-1185">Reference proteome</keyword>
<keyword id="KW-0949">S-adenosyl-L-methionine</keyword>
<keyword id="KW-0808">Transferase</keyword>
<evidence type="ECO:0000250" key="1">
    <source>
        <dbReference type="UniProtKB" id="A4GE69"/>
    </source>
</evidence>
<evidence type="ECO:0000250" key="2">
    <source>
        <dbReference type="UniProtKB" id="A4GE70"/>
    </source>
</evidence>
<evidence type="ECO:0000269" key="3">
    <source>
    </source>
</evidence>
<evidence type="ECO:0000269" key="4">
    <source>
    </source>
</evidence>
<evidence type="ECO:0000269" key="5">
    <source>
    </source>
</evidence>
<evidence type="ECO:0000269" key="6">
    <source>
    </source>
</evidence>
<evidence type="ECO:0000305" key="7"/>
<evidence type="ECO:0000305" key="8">
    <source>
    </source>
</evidence>
<evidence type="ECO:0007744" key="9">
    <source>
        <dbReference type="PDB" id="3B5I"/>
    </source>
</evidence>
<evidence type="ECO:0007829" key="10">
    <source>
        <dbReference type="PDB" id="3B5I"/>
    </source>
</evidence>
<dbReference type="EC" id="2.1.1.278"/>
<dbReference type="EMBL" id="AB010071">
    <property type="protein sequence ID" value="BAB08594.1"/>
    <property type="molecule type" value="Genomic_DNA"/>
</dbReference>
<dbReference type="EMBL" id="CP002688">
    <property type="protein sequence ID" value="AED96605.1"/>
    <property type="molecule type" value="Genomic_DNA"/>
</dbReference>
<dbReference type="EMBL" id="CP002688">
    <property type="protein sequence ID" value="AED96606.1"/>
    <property type="molecule type" value="Genomic_DNA"/>
</dbReference>
<dbReference type="EMBL" id="AK175586">
    <property type="protein sequence ID" value="BAD43349.1"/>
    <property type="molecule type" value="mRNA"/>
</dbReference>
<dbReference type="EMBL" id="AK220857">
    <property type="protein sequence ID" value="BAD94212.1"/>
    <property type="molecule type" value="mRNA"/>
</dbReference>
<dbReference type="EMBL" id="AK229885">
    <property type="protein sequence ID" value="BAF01714.1"/>
    <property type="molecule type" value="mRNA"/>
</dbReference>
<dbReference type="EMBL" id="AY087665">
    <property type="protein sequence ID" value="AAM65203.1"/>
    <property type="status" value="ALT_INIT"/>
    <property type="molecule type" value="mRNA"/>
</dbReference>
<dbReference type="RefSeq" id="NP_001078756.1">
    <molecule id="Q9FLN8-2"/>
    <property type="nucleotide sequence ID" value="NM_001085287.2"/>
</dbReference>
<dbReference type="RefSeq" id="NP_200336.1">
    <molecule id="Q9FLN8-1"/>
    <property type="nucleotide sequence ID" value="NM_124907.5"/>
</dbReference>
<dbReference type="PDB" id="3B5I">
    <property type="method" value="X-ray"/>
    <property type="resolution" value="2.75 A"/>
    <property type="chains" value="A/B=13-386"/>
</dbReference>
<dbReference type="PDBsum" id="3B5I"/>
<dbReference type="SMR" id="Q9FLN8"/>
<dbReference type="BioGRID" id="20862">
    <property type="interactions" value="1"/>
</dbReference>
<dbReference type="STRING" id="3702.Q9FLN8"/>
<dbReference type="iPTMnet" id="Q9FLN8"/>
<dbReference type="PaxDb" id="3702-AT5G55250.1"/>
<dbReference type="ProteomicsDB" id="232192">
    <molecule id="Q9FLN8-1"/>
</dbReference>
<dbReference type="EnsemblPlants" id="AT5G55250.1">
    <molecule id="Q9FLN8-1"/>
    <property type="protein sequence ID" value="AT5G55250.1"/>
    <property type="gene ID" value="AT5G55250"/>
</dbReference>
<dbReference type="EnsemblPlants" id="AT5G55250.2">
    <molecule id="Q9FLN8-2"/>
    <property type="protein sequence ID" value="AT5G55250.2"/>
    <property type="gene ID" value="AT5G55250"/>
</dbReference>
<dbReference type="GeneID" id="835618"/>
<dbReference type="Gramene" id="AT5G55250.1">
    <molecule id="Q9FLN8-1"/>
    <property type="protein sequence ID" value="AT5G55250.1"/>
    <property type="gene ID" value="AT5G55250"/>
</dbReference>
<dbReference type="Gramene" id="AT5G55250.2">
    <molecule id="Q9FLN8-2"/>
    <property type="protein sequence ID" value="AT5G55250.2"/>
    <property type="gene ID" value="AT5G55250"/>
</dbReference>
<dbReference type="KEGG" id="ath:AT5G55250"/>
<dbReference type="Araport" id="AT5G55250"/>
<dbReference type="TAIR" id="AT5G55250">
    <property type="gene designation" value="IAMT1"/>
</dbReference>
<dbReference type="eggNOG" id="ENOG502QQYU">
    <property type="taxonomic scope" value="Eukaryota"/>
</dbReference>
<dbReference type="HOGENOM" id="CLU_019628_1_1_1"/>
<dbReference type="InParanoid" id="Q9FLN8"/>
<dbReference type="OMA" id="NVVHSSF"/>
<dbReference type="OrthoDB" id="1523883at2759"/>
<dbReference type="PhylomeDB" id="Q9FLN8"/>
<dbReference type="BioCyc" id="ARA:AT5G55250-MONOMER"/>
<dbReference type="BRENDA" id="2.1.1.278">
    <property type="organism ID" value="399"/>
</dbReference>
<dbReference type="SABIO-RK" id="Q9FLN8"/>
<dbReference type="EvolutionaryTrace" id="Q9FLN8"/>
<dbReference type="PRO" id="PR:Q9FLN8"/>
<dbReference type="Proteomes" id="UP000006548">
    <property type="component" value="Chromosome 5"/>
</dbReference>
<dbReference type="ExpressionAtlas" id="Q9FLN8">
    <property type="expression patterns" value="baseline and differential"/>
</dbReference>
<dbReference type="GO" id="GO:0042802">
    <property type="term" value="F:identical protein binding"/>
    <property type="evidence" value="ECO:0000353"/>
    <property type="project" value="UniProtKB"/>
</dbReference>
<dbReference type="GO" id="GO:0051749">
    <property type="term" value="F:indole acetic acid carboxyl methyltransferase activity"/>
    <property type="evidence" value="ECO:0000314"/>
    <property type="project" value="TAIR"/>
</dbReference>
<dbReference type="GO" id="GO:0103007">
    <property type="term" value="F:indole-3-acetate carboxyl methyltransferase activity"/>
    <property type="evidence" value="ECO:0007669"/>
    <property type="project" value="UniProtKB-EC"/>
</dbReference>
<dbReference type="GO" id="GO:0000287">
    <property type="term" value="F:magnesium ion binding"/>
    <property type="evidence" value="ECO:0000314"/>
    <property type="project" value="UniProtKB"/>
</dbReference>
<dbReference type="GO" id="GO:0009851">
    <property type="term" value="P:auxin biosynthetic process"/>
    <property type="evidence" value="ECO:0000315"/>
    <property type="project" value="UniProtKB"/>
</dbReference>
<dbReference type="GO" id="GO:0032259">
    <property type="term" value="P:methylation"/>
    <property type="evidence" value="ECO:0007669"/>
    <property type="project" value="UniProtKB-KW"/>
</dbReference>
<dbReference type="GO" id="GO:0009944">
    <property type="term" value="P:polarity specification of adaxial/abaxial axis"/>
    <property type="evidence" value="ECO:0000315"/>
    <property type="project" value="TAIR"/>
</dbReference>
<dbReference type="DisProt" id="DP02696"/>
<dbReference type="Gene3D" id="1.10.1200.270">
    <property type="entry name" value="Methyltransferase, alpha-helical capping domain"/>
    <property type="match status" value="1"/>
</dbReference>
<dbReference type="Gene3D" id="3.40.50.150">
    <property type="entry name" value="Vaccinia Virus protein VP39"/>
    <property type="match status" value="1"/>
</dbReference>
<dbReference type="InterPro" id="IPR005299">
    <property type="entry name" value="MeTrfase_7"/>
</dbReference>
<dbReference type="InterPro" id="IPR042086">
    <property type="entry name" value="MeTrfase_capping"/>
</dbReference>
<dbReference type="InterPro" id="IPR029063">
    <property type="entry name" value="SAM-dependent_MTases_sf"/>
</dbReference>
<dbReference type="PANTHER" id="PTHR31009">
    <property type="entry name" value="S-ADENOSYL-L-METHIONINE:CARBOXYL METHYLTRANSFERASE FAMILY PROTEIN"/>
    <property type="match status" value="1"/>
</dbReference>
<dbReference type="Pfam" id="PF03492">
    <property type="entry name" value="Methyltransf_7"/>
    <property type="match status" value="1"/>
</dbReference>
<dbReference type="SUPFAM" id="SSF53335">
    <property type="entry name" value="S-adenosyl-L-methionine-dependent methyltransferases"/>
    <property type="match status" value="1"/>
</dbReference>
<proteinExistence type="evidence at protein level"/>
<gene>
    <name type="primary">IAMT1</name>
    <name type="ordered locus">At5g55250</name>
    <name type="ORF">MCO15.20</name>
</gene>
<feature type="chain" id="PRO_0000406602" description="Indole-3-acetate O-methyltransferase 1">
    <location>
        <begin position="1"/>
        <end position="386"/>
    </location>
</feature>
<feature type="binding site" evidence="2">
    <location>
        <position position="30"/>
    </location>
    <ligand>
        <name>S-adenosyl-L-methionine</name>
        <dbReference type="ChEBI" id="CHEBI:59789"/>
    </ligand>
</feature>
<feature type="binding site" evidence="2">
    <location>
        <position position="30"/>
    </location>
    <ligand>
        <name>substrate</name>
    </ligand>
</feature>
<feature type="binding site" evidence="1">
    <location>
        <begin position="33"/>
        <end position="37"/>
    </location>
    <ligand>
        <name>substrate</name>
    </ligand>
</feature>
<feature type="binding site" evidence="6 9">
    <location>
        <begin position="72"/>
        <end position="73"/>
    </location>
    <ligand>
        <name>S-adenosyl-L-methionine</name>
        <dbReference type="ChEBI" id="CHEBI:59789"/>
    </ligand>
</feature>
<feature type="binding site" evidence="1">
    <location>
        <position position="72"/>
    </location>
    <ligand>
        <name>S-adenosyl-L-methionine</name>
        <dbReference type="ChEBI" id="CHEBI:59789"/>
    </ligand>
</feature>
<feature type="binding site" evidence="6 9">
    <location>
        <position position="78"/>
    </location>
    <ligand>
        <name>S-adenosyl-L-methionine</name>
        <dbReference type="ChEBI" id="CHEBI:59789"/>
    </ligand>
</feature>
<feature type="binding site" evidence="2">
    <location>
        <begin position="108"/>
        <end position="111"/>
    </location>
    <ligand>
        <name>S-adenosyl-L-methionine</name>
        <dbReference type="ChEBI" id="CHEBI:59789"/>
    </ligand>
</feature>
<feature type="binding site" evidence="6 9">
    <location>
        <position position="110"/>
    </location>
    <ligand>
        <name>S-adenosyl-L-methionine</name>
        <dbReference type="ChEBI" id="CHEBI:59789"/>
    </ligand>
</feature>
<feature type="binding site" evidence="6 9">
    <location>
        <begin position="152"/>
        <end position="154"/>
    </location>
    <ligand>
        <name>S-adenosyl-L-methionine</name>
        <dbReference type="ChEBI" id="CHEBI:59789"/>
    </ligand>
</feature>
<feature type="binding site" evidence="6 9">
    <location>
        <begin position="169"/>
        <end position="171"/>
    </location>
    <ligand>
        <name>S-adenosyl-L-methionine</name>
        <dbReference type="ChEBI" id="CHEBI:59789"/>
    </ligand>
</feature>
<feature type="binding site" evidence="2">
    <location>
        <begin position="170"/>
        <end position="174"/>
    </location>
    <ligand>
        <name>substrate</name>
    </ligand>
</feature>
<feature type="binding site" evidence="6 9">
    <location>
        <position position="191"/>
    </location>
    <ligand>
        <name>Mg(2+)</name>
        <dbReference type="ChEBI" id="CHEBI:18420"/>
    </ligand>
</feature>
<feature type="binding site" evidence="6 9">
    <location>
        <position position="195"/>
    </location>
    <ligand>
        <name>Mg(2+)</name>
        <dbReference type="ChEBI" id="CHEBI:18420"/>
    </ligand>
</feature>
<feature type="binding site" evidence="6 9">
    <location>
        <position position="277"/>
    </location>
    <ligand>
        <name>Mg(2+)</name>
        <dbReference type="ChEBI" id="CHEBI:18420"/>
    </ligand>
</feature>
<feature type="binding site" evidence="6 9">
    <location>
        <position position="278"/>
    </location>
    <ligand>
        <name>Mg(2+)</name>
        <dbReference type="ChEBI" id="CHEBI:18420"/>
    </ligand>
</feature>
<feature type="binding site" evidence="6 9">
    <location>
        <position position="280"/>
    </location>
    <ligand>
        <name>Mg(2+)</name>
        <dbReference type="ChEBI" id="CHEBI:18420"/>
    </ligand>
</feature>
<feature type="binding site" evidence="6 9">
    <location>
        <position position="281"/>
    </location>
    <ligand>
        <name>Mg(2+)</name>
        <dbReference type="ChEBI" id="CHEBI:18420"/>
    </ligand>
</feature>
<feature type="binding site" evidence="1">
    <location>
        <position position="334"/>
    </location>
    <ligand>
        <name>substrate</name>
    </ligand>
</feature>
<feature type="splice variant" id="VSP_040835" description="In isoform 2." evidence="7">
    <location>
        <begin position="1"/>
        <end position="38"/>
    </location>
</feature>
<feature type="sequence conflict" description="In Ref. 4; AAM65203." evidence="7" ref="4">
    <original>A</original>
    <variation>T</variation>
    <location>
        <position position="68"/>
    </location>
</feature>
<feature type="sequence conflict" description="In Ref. 3; BAD94212/BAF01714." evidence="7" ref="3">
    <original>T</original>
    <variation>I</variation>
    <location>
        <position position="241"/>
    </location>
</feature>
<feature type="helix" evidence="10">
    <location>
        <begin position="41"/>
        <end position="53"/>
    </location>
</feature>
<feature type="strand" evidence="10">
    <location>
        <begin position="60"/>
        <end position="62"/>
    </location>
</feature>
<feature type="strand" evidence="10">
    <location>
        <begin position="66"/>
        <end position="71"/>
    </location>
</feature>
<feature type="helix" evidence="10">
    <location>
        <begin position="77"/>
        <end position="96"/>
    </location>
</feature>
<feature type="strand" evidence="10">
    <location>
        <begin position="104"/>
        <end position="110"/>
    </location>
</feature>
<feature type="helix" evidence="10">
    <location>
        <begin position="116"/>
        <end position="122"/>
    </location>
</feature>
<feature type="strand" evidence="10">
    <location>
        <begin position="144"/>
        <end position="151"/>
    </location>
</feature>
<feature type="strand" evidence="10">
    <location>
        <begin position="163"/>
        <end position="170"/>
    </location>
</feature>
<feature type="helix" evidence="10">
    <location>
        <begin position="180"/>
        <end position="183"/>
    </location>
</feature>
<feature type="turn" evidence="10">
    <location>
        <begin position="192"/>
        <end position="194"/>
    </location>
</feature>
<feature type="strand" evidence="10">
    <location>
        <begin position="195"/>
        <end position="199"/>
    </location>
</feature>
<feature type="helix" evidence="10">
    <location>
        <begin position="202"/>
        <end position="226"/>
    </location>
</feature>
<feature type="strand" evidence="10">
    <location>
        <begin position="227"/>
        <end position="239"/>
    </location>
</feature>
<feature type="helix" evidence="10">
    <location>
        <begin position="249"/>
        <end position="255"/>
    </location>
</feature>
<feature type="helix" evidence="10">
    <location>
        <begin position="258"/>
        <end position="265"/>
    </location>
</feature>
<feature type="strand" evidence="10">
    <location>
        <begin position="268"/>
        <end position="272"/>
    </location>
</feature>
<feature type="helix" evidence="10">
    <location>
        <begin position="274"/>
        <end position="277"/>
    </location>
</feature>
<feature type="helix" evidence="10">
    <location>
        <begin position="289"/>
        <end position="299"/>
    </location>
</feature>
<feature type="strand" evidence="10">
    <location>
        <begin position="301"/>
        <end position="311"/>
    </location>
</feature>
<feature type="helix" evidence="10">
    <location>
        <begin position="324"/>
        <end position="344"/>
    </location>
</feature>
<feature type="helix" evidence="10">
    <location>
        <begin position="349"/>
        <end position="365"/>
    </location>
</feature>
<feature type="helix" evidence="10">
    <location>
        <begin position="368"/>
        <end position="371"/>
    </location>
</feature>
<feature type="strand" evidence="10">
    <location>
        <begin position="377"/>
        <end position="385"/>
    </location>
</feature>
<reference key="1">
    <citation type="journal article" date="1998" name="DNA Res.">
        <title>Structural analysis of Arabidopsis thaliana chromosome 5. IV. Sequence features of the regions of 1,456,315 bp covered by nineteen physically assigned P1 and TAC clones.</title>
        <authorList>
            <person name="Sato S."/>
            <person name="Kaneko T."/>
            <person name="Kotani H."/>
            <person name="Nakamura Y."/>
            <person name="Asamizu E."/>
            <person name="Miyajima N."/>
            <person name="Tabata S."/>
        </authorList>
    </citation>
    <scope>NUCLEOTIDE SEQUENCE [LARGE SCALE GENOMIC DNA]</scope>
    <source>
        <strain>cv. Columbia</strain>
    </source>
</reference>
<reference key="2">
    <citation type="journal article" date="2017" name="Plant J.">
        <title>Araport11: a complete reannotation of the Arabidopsis thaliana reference genome.</title>
        <authorList>
            <person name="Cheng C.Y."/>
            <person name="Krishnakumar V."/>
            <person name="Chan A.P."/>
            <person name="Thibaud-Nissen F."/>
            <person name="Schobel S."/>
            <person name="Town C.D."/>
        </authorList>
    </citation>
    <scope>GENOME REANNOTATION</scope>
    <source>
        <strain>cv. Columbia</strain>
    </source>
</reference>
<reference key="3">
    <citation type="submission" date="2006-07" db="EMBL/GenBank/DDBJ databases">
        <title>Large-scale analysis of RIKEN Arabidopsis full-length (RAFL) cDNAs.</title>
        <authorList>
            <person name="Totoki Y."/>
            <person name="Seki M."/>
            <person name="Ishida J."/>
            <person name="Nakajima M."/>
            <person name="Enju A."/>
            <person name="Kamiya A."/>
            <person name="Narusaka M."/>
            <person name="Shin-i T."/>
            <person name="Nakagawa M."/>
            <person name="Sakamoto N."/>
            <person name="Oishi K."/>
            <person name="Kohara Y."/>
            <person name="Kobayashi M."/>
            <person name="Toyoda A."/>
            <person name="Sakaki Y."/>
            <person name="Sakurai T."/>
            <person name="Iida K."/>
            <person name="Akiyama K."/>
            <person name="Satou M."/>
            <person name="Toyoda T."/>
            <person name="Konagaya A."/>
            <person name="Carninci P."/>
            <person name="Kawai J."/>
            <person name="Hayashizaki Y."/>
            <person name="Shinozaki K."/>
        </authorList>
    </citation>
    <scope>NUCLEOTIDE SEQUENCE [LARGE SCALE MRNA] (ISOFORM 1)</scope>
    <source>
        <strain>cv. Columbia</strain>
    </source>
</reference>
<reference key="4">
    <citation type="submission" date="2002-03" db="EMBL/GenBank/DDBJ databases">
        <title>Full-length cDNA from Arabidopsis thaliana.</title>
        <authorList>
            <person name="Brover V.V."/>
            <person name="Troukhan M.E."/>
            <person name="Alexandrov N.A."/>
            <person name="Lu Y.-P."/>
            <person name="Flavell R.B."/>
            <person name="Feldmann K.A."/>
        </authorList>
    </citation>
    <scope>NUCLEOTIDE SEQUENCE [LARGE SCALE MRNA] (ISOFORM 1)</scope>
</reference>
<reference key="5">
    <citation type="journal article" date="2003" name="Plant Cell">
        <title>Structural basis for substrate recognition in the salicylic acid carboxyl methyltransferase family.</title>
        <authorList>
            <person name="Zubieta C."/>
            <person name="Ross J.R."/>
            <person name="Koscheski P."/>
            <person name="Yang Y."/>
            <person name="Pichersky E."/>
            <person name="Noel J.P."/>
        </authorList>
    </citation>
    <scope>FUNCTION</scope>
    <scope>CATALYTIC ACTIVITY</scope>
    <scope>BIOPHYSICOCHEMICAL PROPERTIES</scope>
</reference>
<reference key="6">
    <citation type="journal article" date="2005" name="Plant Cell">
        <title>An indole-3-acetic acid carboxyl methyltransferase regulates Arabidopsis leaf development.</title>
        <authorList>
            <person name="Qin G."/>
            <person name="Gu H."/>
            <person name="Zhao Y."/>
            <person name="Ma Z."/>
            <person name="Shi G."/>
            <person name="Yang Y."/>
            <person name="Pichersky E."/>
            <person name="Chen H."/>
            <person name="Liu M."/>
            <person name="Chen Z."/>
            <person name="Qu L.J."/>
        </authorList>
    </citation>
    <scope>FUNCTION</scope>
    <scope>TISSUE SPECIFICITY</scope>
    <scope>DEVELOPMENTAL STAGE</scope>
</reference>
<reference key="7">
    <citation type="journal article" date="2008" name="Plant Cell Rep.">
        <title>The possible action mechanisms of indole-3-acetic acid methyl ester in Arabidopsis.</title>
        <authorList>
            <person name="Li L."/>
            <person name="Hou X."/>
            <person name="Tsuge T."/>
            <person name="Ding M."/>
            <person name="Aoyama T."/>
            <person name="Oka A."/>
            <person name="Gu H."/>
            <person name="Zhao Y."/>
            <person name="Qu L.J."/>
        </authorList>
    </citation>
    <scope>FUNCTION</scope>
</reference>
<reference key="8">
    <citation type="journal article" date="2008" name="Plant Physiol.">
        <title>Structural, biochemical, and phylogenetic analyses suggest that indole-3-acetic acid methyltransferase is an evolutionarily ancient member of the SABATH family.</title>
        <authorList>
            <person name="Zhao N."/>
            <person name="Ferrer J.L."/>
            <person name="Ross J."/>
            <person name="Guan J."/>
            <person name="Yang Y."/>
            <person name="Pichersky E."/>
            <person name="Noel J.P."/>
            <person name="Chen F."/>
        </authorList>
    </citation>
    <scope>X-RAY CRYSTALLOGRAPHY (2.75 ANGSTROMS) OF 13-386 IN COMPLEX WITH S-ADENOSYL-L-HOMOCYSTEINE</scope>
    <scope>COFACTOR</scope>
    <scope>SUBUNIT</scope>
</reference>